<accession>P02222</accession>
<evidence type="ECO:0000255" key="1">
    <source>
        <dbReference type="PROSITE-ProRule" id="PRU00238"/>
    </source>
</evidence>
<evidence type="ECO:0000269" key="2">
    <source ref="2"/>
</evidence>
<reference key="1">
    <citation type="journal article" date="1994" name="J. Mol. Evol.">
        <title>Intron-containing globin genes in the insect Chironomus thummi.</title>
        <authorList>
            <person name="Kao W.-Y."/>
            <person name="Trewitt P.M."/>
            <person name="Bergtrom G."/>
        </authorList>
    </citation>
    <scope>NUCLEOTIDE SEQUENCE [GENOMIC DNA]</scope>
</reference>
<reference key="2">
    <citation type="journal article" date="1978" name="Justus Liebigs Ann. Chem.">
        <title>Haemoglobins, XXIV. Concerning the primary structure of a dimeric haemoglobin, erythrocruorin, from insects (component II beta of Chironomus thummi thummi, Diptera).</title>
        <authorList>
            <person name="Kleinschmidt T."/>
            <person name="Braunitzer G."/>
        </authorList>
    </citation>
    <scope>PROTEIN SEQUENCE OF 16-160</scope>
</reference>
<comment type="subunit">
    <text>Homodimer.</text>
</comment>
<comment type="miscellaneous">
    <text>There are at least 12 different components in Midge globin.</text>
</comment>
<comment type="similarity">
    <text evidence="1">Belongs to the globin family.</text>
</comment>
<name>GLB2_CHITH</name>
<proteinExistence type="evidence at protein level"/>
<dbReference type="EMBL" id="AF001292">
    <property type="protein sequence ID" value="AAB58932.1"/>
    <property type="molecule type" value="Genomic_DNA"/>
</dbReference>
<dbReference type="PIR" id="A02544">
    <property type="entry name" value="GGICE2"/>
</dbReference>
<dbReference type="SMR" id="P02222"/>
<dbReference type="Allergome" id="207">
    <property type="allergen name" value="Chi t 3"/>
</dbReference>
<dbReference type="Allergome" id="3192">
    <property type="allergen name" value="Chi t 3.0101"/>
</dbReference>
<dbReference type="GO" id="GO:0005576">
    <property type="term" value="C:extracellular region"/>
    <property type="evidence" value="ECO:0007669"/>
    <property type="project" value="InterPro"/>
</dbReference>
<dbReference type="GO" id="GO:0005833">
    <property type="term" value="C:hemoglobin complex"/>
    <property type="evidence" value="ECO:0007669"/>
    <property type="project" value="InterPro"/>
</dbReference>
<dbReference type="GO" id="GO:0020037">
    <property type="term" value="F:heme binding"/>
    <property type="evidence" value="ECO:0007669"/>
    <property type="project" value="InterPro"/>
</dbReference>
<dbReference type="GO" id="GO:0046872">
    <property type="term" value="F:metal ion binding"/>
    <property type="evidence" value="ECO:0007669"/>
    <property type="project" value="UniProtKB-KW"/>
</dbReference>
<dbReference type="GO" id="GO:0019825">
    <property type="term" value="F:oxygen binding"/>
    <property type="evidence" value="ECO:0007669"/>
    <property type="project" value="InterPro"/>
</dbReference>
<dbReference type="GO" id="GO:0005344">
    <property type="term" value="F:oxygen carrier activity"/>
    <property type="evidence" value="ECO:0007669"/>
    <property type="project" value="UniProtKB-KW"/>
</dbReference>
<dbReference type="CDD" id="cd01040">
    <property type="entry name" value="Mb-like"/>
    <property type="match status" value="1"/>
</dbReference>
<dbReference type="Gene3D" id="1.10.490.10">
    <property type="entry name" value="Globins"/>
    <property type="match status" value="1"/>
</dbReference>
<dbReference type="InterPro" id="IPR002336">
    <property type="entry name" value="Erythrocruorin"/>
</dbReference>
<dbReference type="InterPro" id="IPR000971">
    <property type="entry name" value="Globin"/>
</dbReference>
<dbReference type="InterPro" id="IPR009050">
    <property type="entry name" value="Globin-like_sf"/>
</dbReference>
<dbReference type="InterPro" id="IPR012292">
    <property type="entry name" value="Globin/Proto"/>
</dbReference>
<dbReference type="InterPro" id="IPR044399">
    <property type="entry name" value="Mb-like_M"/>
</dbReference>
<dbReference type="PANTHER" id="PTHR47217">
    <property type="entry name" value="GLOBIN-LIKE PROTEIN"/>
    <property type="match status" value="1"/>
</dbReference>
<dbReference type="PANTHER" id="PTHR47217:SF1">
    <property type="entry name" value="GLOBIN-LIKE PROTEIN"/>
    <property type="match status" value="1"/>
</dbReference>
<dbReference type="Pfam" id="PF00042">
    <property type="entry name" value="Globin"/>
    <property type="match status" value="1"/>
</dbReference>
<dbReference type="PRINTS" id="PR00611">
    <property type="entry name" value="ERYTHCRUORIN"/>
</dbReference>
<dbReference type="SUPFAM" id="SSF46458">
    <property type="entry name" value="Globin-like"/>
    <property type="match status" value="1"/>
</dbReference>
<dbReference type="PROSITE" id="PS01033">
    <property type="entry name" value="GLOBIN"/>
    <property type="match status" value="1"/>
</dbReference>
<organism>
    <name type="scientific">Chironomus thummi thummi</name>
    <name type="common">Midge</name>
    <dbReference type="NCBI Taxonomy" id="7155"/>
    <lineage>
        <taxon>Eukaryota</taxon>
        <taxon>Metazoa</taxon>
        <taxon>Ecdysozoa</taxon>
        <taxon>Arthropoda</taxon>
        <taxon>Hexapoda</taxon>
        <taxon>Insecta</taxon>
        <taxon>Pterygota</taxon>
        <taxon>Neoptera</taxon>
        <taxon>Endopterygota</taxon>
        <taxon>Diptera</taxon>
        <taxon>Nematocera</taxon>
        <taxon>Chironomoidea</taxon>
        <taxon>Chironomidae</taxon>
        <taxon>Chironominae</taxon>
        <taxon>Chironomus</taxon>
    </lineage>
</organism>
<protein>
    <recommendedName>
        <fullName>Globin CTT-II beta</fullName>
    </recommendedName>
</protein>
<feature type="signal peptide" evidence="2">
    <location>
        <begin position="1"/>
        <end position="15"/>
    </location>
</feature>
<feature type="chain" id="PRO_0000011189" description="Globin CTT-II beta">
    <location>
        <begin position="16"/>
        <end position="160"/>
    </location>
</feature>
<feature type="domain" description="Globin" evidence="1">
    <location>
        <begin position="17"/>
        <end position="160"/>
    </location>
</feature>
<feature type="binding site" description="distal binding residue" evidence="1">
    <location>
        <position position="75"/>
    </location>
    <ligand>
        <name>heme b</name>
        <dbReference type="ChEBI" id="CHEBI:60344"/>
    </ligand>
    <ligandPart>
        <name>Fe</name>
        <dbReference type="ChEBI" id="CHEBI:18248"/>
    </ligandPart>
</feature>
<feature type="binding site" description="proximal binding residue" evidence="1">
    <location>
        <position position="110"/>
    </location>
    <ligand>
        <name>heme b</name>
        <dbReference type="ChEBI" id="CHEBI:60344"/>
    </ligand>
    <ligandPart>
        <name>Fe</name>
        <dbReference type="ChEBI" id="CHEBI:18248"/>
    </ligandPart>
</feature>
<keyword id="KW-0903">Direct protein sequencing</keyword>
<keyword id="KW-0349">Heme</keyword>
<keyword id="KW-0408">Iron</keyword>
<keyword id="KW-0479">Metal-binding</keyword>
<keyword id="KW-0561">Oxygen transport</keyword>
<keyword id="KW-0732">Signal</keyword>
<keyword id="KW-0813">Transport</keyword>
<sequence length="160" mass="17439">MKFLVLALCIAAAVAAPLSADEASLVRGSWAQVKHSEVDILYYIFKANPDIMAKFPQFAGKDLETLKGTGQFATHAGRIVGFVSEIVALMGNSANMPAMETLIKDMAANHKARGIPKAQFNEFRASLVSYLQSKVSWNDSLGAAWTQGLDNVFNMMFSYL</sequence>